<name>HIS81_CAUVC</name>
<accession>Q9A671</accession>
<sequence length="359" mass="39262">MPKPGIMDIHAYVGGKSKVEGIAHPVKLSSNENILGSSDKAKDAYRNAVDRLHIYPDGKANFLRAAVAERYKLEPERLTFGDGSDEIFALLCQVYLEPGDNIVQGEHGFAAYAIGARACQGEVRMAKEVNHRVDIDEVIKCVDERTRLVFIANPANPTGTWLTGEEIRALHAALPPSVVLVLDGAYAEFCSDPHFEDGLELARTAENVIVTRTFSKIHGLAALRVGWGYAPEHIIAPIERIRPPFNTSIPAQEAAVAALFDDDFQDRSRALVEQWRPWLAQQLGGLGLEVTPSAANFVLATFPTTPGKTAPEAEAFLASKGYLVRAVGNYNLPHAIRITIGLEEQNRAVVELLSQFMGR</sequence>
<organism>
    <name type="scientific">Caulobacter vibrioides (strain ATCC 19089 / CIP 103742 / CB 15)</name>
    <name type="common">Caulobacter crescentus</name>
    <dbReference type="NCBI Taxonomy" id="190650"/>
    <lineage>
        <taxon>Bacteria</taxon>
        <taxon>Pseudomonadati</taxon>
        <taxon>Pseudomonadota</taxon>
        <taxon>Alphaproteobacteria</taxon>
        <taxon>Caulobacterales</taxon>
        <taxon>Caulobacteraceae</taxon>
        <taxon>Caulobacter</taxon>
    </lineage>
</organism>
<keyword id="KW-0028">Amino-acid biosynthesis</keyword>
<keyword id="KW-0032">Aminotransferase</keyword>
<keyword id="KW-0368">Histidine biosynthesis</keyword>
<keyword id="KW-0663">Pyridoxal phosphate</keyword>
<keyword id="KW-1185">Reference proteome</keyword>
<keyword id="KW-0808">Transferase</keyword>
<protein>
    <recommendedName>
        <fullName>Histidinol-phosphate aminotransferase 1</fullName>
        <ecNumber>2.6.1.9</ecNumber>
    </recommendedName>
    <alternativeName>
        <fullName>Imidazole acetol-phosphate transaminase 1</fullName>
    </alternativeName>
</protein>
<gene>
    <name type="primary">hisC1</name>
    <name type="ordered locus">CC_2223</name>
</gene>
<comment type="catalytic activity">
    <reaction>
        <text>L-histidinol phosphate + 2-oxoglutarate = 3-(imidazol-4-yl)-2-oxopropyl phosphate + L-glutamate</text>
        <dbReference type="Rhea" id="RHEA:23744"/>
        <dbReference type="ChEBI" id="CHEBI:16810"/>
        <dbReference type="ChEBI" id="CHEBI:29985"/>
        <dbReference type="ChEBI" id="CHEBI:57766"/>
        <dbReference type="ChEBI" id="CHEBI:57980"/>
        <dbReference type="EC" id="2.6.1.9"/>
    </reaction>
</comment>
<comment type="cofactor">
    <cofactor evidence="1">
        <name>pyridoxal 5'-phosphate</name>
        <dbReference type="ChEBI" id="CHEBI:597326"/>
    </cofactor>
</comment>
<comment type="pathway">
    <text>Amino-acid biosynthesis; L-histidine biosynthesis; L-histidine from 5-phospho-alpha-D-ribose 1-diphosphate: step 7/9.</text>
</comment>
<comment type="subunit">
    <text evidence="1">Homodimer.</text>
</comment>
<comment type="similarity">
    <text evidence="2">Belongs to the class-II pyridoxal-phosphate-dependent aminotransferase family. Histidinol-phosphate aminotransferase subfamily.</text>
</comment>
<feature type="chain" id="PRO_0000153342" description="Histidinol-phosphate aminotransferase 1">
    <location>
        <begin position="1"/>
        <end position="359"/>
    </location>
</feature>
<feature type="modified residue" description="N6-(pyridoxal phosphate)lysine" evidence="1">
    <location>
        <position position="216"/>
    </location>
</feature>
<reference key="1">
    <citation type="journal article" date="2001" name="Proc. Natl. Acad. Sci. U.S.A.">
        <title>Complete genome sequence of Caulobacter crescentus.</title>
        <authorList>
            <person name="Nierman W.C."/>
            <person name="Feldblyum T.V."/>
            <person name="Laub M.T."/>
            <person name="Paulsen I.T."/>
            <person name="Nelson K.E."/>
            <person name="Eisen J.A."/>
            <person name="Heidelberg J.F."/>
            <person name="Alley M.R.K."/>
            <person name="Ohta N."/>
            <person name="Maddock J.R."/>
            <person name="Potocka I."/>
            <person name="Nelson W.C."/>
            <person name="Newton A."/>
            <person name="Stephens C."/>
            <person name="Phadke N.D."/>
            <person name="Ely B."/>
            <person name="DeBoy R.T."/>
            <person name="Dodson R.J."/>
            <person name="Durkin A.S."/>
            <person name="Gwinn M.L."/>
            <person name="Haft D.H."/>
            <person name="Kolonay J.F."/>
            <person name="Smit J."/>
            <person name="Craven M.B."/>
            <person name="Khouri H.M."/>
            <person name="Shetty J."/>
            <person name="Berry K.J."/>
            <person name="Utterback T.R."/>
            <person name="Tran K."/>
            <person name="Wolf A.M."/>
            <person name="Vamathevan J.J."/>
            <person name="Ermolaeva M.D."/>
            <person name="White O."/>
            <person name="Salzberg S.L."/>
            <person name="Venter J.C."/>
            <person name="Shapiro L."/>
            <person name="Fraser C.M."/>
        </authorList>
    </citation>
    <scope>NUCLEOTIDE SEQUENCE [LARGE SCALE GENOMIC DNA]</scope>
    <source>
        <strain>ATCC 19089 / CIP 103742 / CB 15</strain>
    </source>
</reference>
<dbReference type="EC" id="2.6.1.9"/>
<dbReference type="EMBL" id="AE005673">
    <property type="protein sequence ID" value="AAK24194.1"/>
    <property type="molecule type" value="Genomic_DNA"/>
</dbReference>
<dbReference type="PIR" id="F87524">
    <property type="entry name" value="F87524"/>
</dbReference>
<dbReference type="RefSeq" id="NP_421026.1">
    <property type="nucleotide sequence ID" value="NC_002696.2"/>
</dbReference>
<dbReference type="SMR" id="Q9A671"/>
<dbReference type="STRING" id="190650.CC_2223"/>
<dbReference type="EnsemblBacteria" id="AAK24194">
    <property type="protein sequence ID" value="AAK24194"/>
    <property type="gene ID" value="CC_2223"/>
</dbReference>
<dbReference type="KEGG" id="ccr:CC_2223"/>
<dbReference type="PATRIC" id="fig|190650.5.peg.2240"/>
<dbReference type="eggNOG" id="COG0079">
    <property type="taxonomic scope" value="Bacteria"/>
</dbReference>
<dbReference type="HOGENOM" id="CLU_017584_3_3_5"/>
<dbReference type="BioCyc" id="CAULO:CC2223-MONOMER"/>
<dbReference type="UniPathway" id="UPA00031">
    <property type="reaction ID" value="UER00012"/>
</dbReference>
<dbReference type="Proteomes" id="UP000001816">
    <property type="component" value="Chromosome"/>
</dbReference>
<dbReference type="GO" id="GO:0004400">
    <property type="term" value="F:histidinol-phosphate transaminase activity"/>
    <property type="evidence" value="ECO:0007669"/>
    <property type="project" value="UniProtKB-UniRule"/>
</dbReference>
<dbReference type="GO" id="GO:0030170">
    <property type="term" value="F:pyridoxal phosphate binding"/>
    <property type="evidence" value="ECO:0007669"/>
    <property type="project" value="InterPro"/>
</dbReference>
<dbReference type="GO" id="GO:0000105">
    <property type="term" value="P:L-histidine biosynthetic process"/>
    <property type="evidence" value="ECO:0007669"/>
    <property type="project" value="UniProtKB-UniRule"/>
</dbReference>
<dbReference type="CDD" id="cd00609">
    <property type="entry name" value="AAT_like"/>
    <property type="match status" value="1"/>
</dbReference>
<dbReference type="Gene3D" id="3.90.1150.10">
    <property type="entry name" value="Aspartate Aminotransferase, domain 1"/>
    <property type="match status" value="1"/>
</dbReference>
<dbReference type="Gene3D" id="3.40.640.10">
    <property type="entry name" value="Type I PLP-dependent aspartate aminotransferase-like (Major domain)"/>
    <property type="match status" value="1"/>
</dbReference>
<dbReference type="HAMAP" id="MF_01023">
    <property type="entry name" value="HisC_aminotrans_2"/>
    <property type="match status" value="1"/>
</dbReference>
<dbReference type="InterPro" id="IPR004839">
    <property type="entry name" value="Aminotransferase_I/II_large"/>
</dbReference>
<dbReference type="InterPro" id="IPR005861">
    <property type="entry name" value="HisP_aminotrans"/>
</dbReference>
<dbReference type="InterPro" id="IPR050106">
    <property type="entry name" value="HistidinolP_aminotransfase"/>
</dbReference>
<dbReference type="InterPro" id="IPR015424">
    <property type="entry name" value="PyrdxlP-dep_Trfase"/>
</dbReference>
<dbReference type="InterPro" id="IPR015421">
    <property type="entry name" value="PyrdxlP-dep_Trfase_major"/>
</dbReference>
<dbReference type="InterPro" id="IPR015422">
    <property type="entry name" value="PyrdxlP-dep_Trfase_small"/>
</dbReference>
<dbReference type="NCBIfam" id="TIGR01141">
    <property type="entry name" value="hisC"/>
    <property type="match status" value="1"/>
</dbReference>
<dbReference type="PANTHER" id="PTHR43643:SF3">
    <property type="entry name" value="HISTIDINOL-PHOSPHATE AMINOTRANSFERASE"/>
    <property type="match status" value="1"/>
</dbReference>
<dbReference type="PANTHER" id="PTHR43643">
    <property type="entry name" value="HISTIDINOL-PHOSPHATE AMINOTRANSFERASE 2"/>
    <property type="match status" value="1"/>
</dbReference>
<dbReference type="Pfam" id="PF00155">
    <property type="entry name" value="Aminotran_1_2"/>
    <property type="match status" value="1"/>
</dbReference>
<dbReference type="SUPFAM" id="SSF53383">
    <property type="entry name" value="PLP-dependent transferases"/>
    <property type="match status" value="1"/>
</dbReference>
<proteinExistence type="inferred from homology"/>
<evidence type="ECO:0000250" key="1"/>
<evidence type="ECO:0000305" key="2"/>